<accession>Q24558</accession>
<accession>B9EQW7</accession>
<accession>Q24557</accession>
<accession>Q960X5</accession>
<dbReference type="EC" id="3.1.-.-"/>
<dbReference type="EMBL" id="X89021">
    <property type="protein sequence ID" value="CAA61430.1"/>
    <property type="molecule type" value="mRNA"/>
</dbReference>
<dbReference type="EMBL" id="X89022">
    <property type="protein sequence ID" value="CAA61431.1"/>
    <property type="molecule type" value="Genomic_DNA"/>
</dbReference>
<dbReference type="EMBL" id="AE014134">
    <property type="protein sequence ID" value="AAF53687.1"/>
    <property type="molecule type" value="Genomic_DNA"/>
</dbReference>
<dbReference type="EMBL" id="AY051794">
    <property type="protein sequence ID" value="AAK93218.1"/>
    <property type="molecule type" value="mRNA"/>
</dbReference>
<dbReference type="EMBL" id="BT058042">
    <property type="protein sequence ID" value="ACM78484.1"/>
    <property type="molecule type" value="mRNA"/>
</dbReference>
<dbReference type="RefSeq" id="NP_477145.1">
    <property type="nucleotide sequence ID" value="NM_057797.4"/>
</dbReference>
<dbReference type="SMR" id="Q24558"/>
<dbReference type="BioGRID" id="61114">
    <property type="interactions" value="32"/>
</dbReference>
<dbReference type="FunCoup" id="Q24558">
    <property type="interactions" value="948"/>
</dbReference>
<dbReference type="IntAct" id="Q24558">
    <property type="interactions" value="3"/>
</dbReference>
<dbReference type="STRING" id="7227.FBpp0080675"/>
<dbReference type="iPTMnet" id="Q24558"/>
<dbReference type="PaxDb" id="7227-FBpp0080675"/>
<dbReference type="DNASU" id="35119"/>
<dbReference type="EnsemblMetazoa" id="FBtr0081131">
    <property type="protein sequence ID" value="FBpp0080675"/>
    <property type="gene ID" value="FBgn0015553"/>
</dbReference>
<dbReference type="GeneID" id="35119"/>
<dbReference type="KEGG" id="dme:Dmel_CG10387"/>
<dbReference type="UCSC" id="CG10387-RA">
    <property type="organism name" value="d. melanogaster"/>
</dbReference>
<dbReference type="AGR" id="FB:FBgn0015553"/>
<dbReference type="CTD" id="35119"/>
<dbReference type="FlyBase" id="FBgn0015553">
    <property type="gene designation" value="tos"/>
</dbReference>
<dbReference type="VEuPathDB" id="VectorBase:FBgn0015553"/>
<dbReference type="eggNOG" id="KOG2518">
    <property type="taxonomic scope" value="Eukaryota"/>
</dbReference>
<dbReference type="GeneTree" id="ENSGT00510000047676"/>
<dbReference type="HOGENOM" id="CLU_017284_1_0_1"/>
<dbReference type="InParanoid" id="Q24558"/>
<dbReference type="OMA" id="AQMAWLN"/>
<dbReference type="OrthoDB" id="26491at2759"/>
<dbReference type="PhylomeDB" id="Q24558"/>
<dbReference type="Reactome" id="R-DME-5358565">
    <property type="pathway name" value="Mismatch repair (MMR) directed by MSH2:MSH6 (MutSalpha)"/>
</dbReference>
<dbReference type="Reactome" id="R-DME-5693607">
    <property type="pathway name" value="Processing of DNA double-strand break ends"/>
</dbReference>
<dbReference type="Reactome" id="R-DME-6804756">
    <property type="pathway name" value="Regulation of TP53 Activity through Phosphorylation"/>
</dbReference>
<dbReference type="Reactome" id="R-DME-69473">
    <property type="pathway name" value="G2/M DNA damage checkpoint"/>
</dbReference>
<dbReference type="SignaLink" id="Q24558"/>
<dbReference type="BioGRID-ORCS" id="35119">
    <property type="hits" value="0 hits in 1 CRISPR screen"/>
</dbReference>
<dbReference type="GenomeRNAi" id="35119"/>
<dbReference type="PRO" id="PR:Q24558"/>
<dbReference type="Proteomes" id="UP000000803">
    <property type="component" value="Chromosome 2L"/>
</dbReference>
<dbReference type="Bgee" id="FBgn0015553">
    <property type="expression patterns" value="Expressed in secondary oocyte and 31 other cell types or tissues"/>
</dbReference>
<dbReference type="GO" id="GO:0005634">
    <property type="term" value="C:nucleus"/>
    <property type="evidence" value="ECO:0000250"/>
    <property type="project" value="UniProtKB"/>
</dbReference>
<dbReference type="GO" id="GO:0035312">
    <property type="term" value="F:5'-3' DNA exonuclease activity"/>
    <property type="evidence" value="ECO:0000318"/>
    <property type="project" value="GO_Central"/>
</dbReference>
<dbReference type="GO" id="GO:0008409">
    <property type="term" value="F:5'-3' exonuclease activity"/>
    <property type="evidence" value="ECO:0000250"/>
    <property type="project" value="UniProtKB"/>
</dbReference>
<dbReference type="GO" id="GO:0017108">
    <property type="term" value="F:5'-flap endonuclease activity"/>
    <property type="evidence" value="ECO:0000318"/>
    <property type="project" value="GO_Central"/>
</dbReference>
<dbReference type="GO" id="GO:0003677">
    <property type="term" value="F:DNA binding"/>
    <property type="evidence" value="ECO:0007669"/>
    <property type="project" value="UniProtKB-KW"/>
</dbReference>
<dbReference type="GO" id="GO:0051908">
    <property type="term" value="F:double-stranded DNA 5'-3' DNA exonuclease activity"/>
    <property type="evidence" value="ECO:0000250"/>
    <property type="project" value="UniProtKB"/>
</dbReference>
<dbReference type="GO" id="GO:0048256">
    <property type="term" value="F:flap endonuclease activity"/>
    <property type="evidence" value="ECO:0000250"/>
    <property type="project" value="UniProtKB"/>
</dbReference>
<dbReference type="GO" id="GO:0046872">
    <property type="term" value="F:metal ion binding"/>
    <property type="evidence" value="ECO:0007669"/>
    <property type="project" value="UniProtKB-KW"/>
</dbReference>
<dbReference type="GO" id="GO:0045145">
    <property type="term" value="F:single-stranded DNA 5'-3' DNA exonuclease activity"/>
    <property type="evidence" value="ECO:0000250"/>
    <property type="project" value="UniProtKB"/>
</dbReference>
<dbReference type="GO" id="GO:0006310">
    <property type="term" value="P:DNA recombination"/>
    <property type="evidence" value="ECO:0000250"/>
    <property type="project" value="UniProtKB"/>
</dbReference>
<dbReference type="GO" id="GO:0006298">
    <property type="term" value="P:mismatch repair"/>
    <property type="evidence" value="ECO:0000250"/>
    <property type="project" value="UniProtKB"/>
</dbReference>
<dbReference type="CDD" id="cd09908">
    <property type="entry name" value="H3TH_EXO1"/>
    <property type="match status" value="1"/>
</dbReference>
<dbReference type="CDD" id="cd09857">
    <property type="entry name" value="PIN_EXO1"/>
    <property type="match status" value="1"/>
</dbReference>
<dbReference type="FunFam" id="1.10.150.20:FF:000011">
    <property type="entry name" value="exonuclease 1"/>
    <property type="match status" value="1"/>
</dbReference>
<dbReference type="FunFam" id="3.40.50.1010:FF:000002">
    <property type="entry name" value="Exonuclease 1, putative"/>
    <property type="match status" value="1"/>
</dbReference>
<dbReference type="Gene3D" id="1.10.150.20">
    <property type="entry name" value="5' to 3' exonuclease, C-terminal subdomain"/>
    <property type="match status" value="1"/>
</dbReference>
<dbReference type="Gene3D" id="3.40.50.1010">
    <property type="entry name" value="5'-nuclease"/>
    <property type="match status" value="1"/>
</dbReference>
<dbReference type="InterPro" id="IPR036279">
    <property type="entry name" value="5-3_exonuclease_C_sf"/>
</dbReference>
<dbReference type="InterPro" id="IPR037315">
    <property type="entry name" value="EXO1_H3TH"/>
</dbReference>
<dbReference type="InterPro" id="IPR008918">
    <property type="entry name" value="HhH2"/>
</dbReference>
<dbReference type="InterPro" id="IPR029060">
    <property type="entry name" value="PIN-like_dom_sf"/>
</dbReference>
<dbReference type="InterPro" id="IPR044752">
    <property type="entry name" value="PIN-like_EXO1"/>
</dbReference>
<dbReference type="InterPro" id="IPR006086">
    <property type="entry name" value="XPG-I_dom"/>
</dbReference>
<dbReference type="InterPro" id="IPR006084">
    <property type="entry name" value="XPG/Rad2"/>
</dbReference>
<dbReference type="InterPro" id="IPR019974">
    <property type="entry name" value="XPG_CS"/>
</dbReference>
<dbReference type="InterPro" id="IPR006085">
    <property type="entry name" value="XPG_DNA_repair_N"/>
</dbReference>
<dbReference type="PANTHER" id="PTHR11081:SF8">
    <property type="entry name" value="EXONUCLEASE 1"/>
    <property type="match status" value="1"/>
</dbReference>
<dbReference type="PANTHER" id="PTHR11081">
    <property type="entry name" value="FLAP ENDONUCLEASE FAMILY MEMBER"/>
    <property type="match status" value="1"/>
</dbReference>
<dbReference type="Pfam" id="PF00867">
    <property type="entry name" value="XPG_I"/>
    <property type="match status" value="1"/>
</dbReference>
<dbReference type="Pfam" id="PF00752">
    <property type="entry name" value="XPG_N"/>
    <property type="match status" value="1"/>
</dbReference>
<dbReference type="PRINTS" id="PR00853">
    <property type="entry name" value="XPGRADSUPER"/>
</dbReference>
<dbReference type="SMART" id="SM00279">
    <property type="entry name" value="HhH2"/>
    <property type="match status" value="1"/>
</dbReference>
<dbReference type="SMART" id="SM00484">
    <property type="entry name" value="XPGI"/>
    <property type="match status" value="1"/>
</dbReference>
<dbReference type="SMART" id="SM00485">
    <property type="entry name" value="XPGN"/>
    <property type="match status" value="1"/>
</dbReference>
<dbReference type="SUPFAM" id="SSF47807">
    <property type="entry name" value="5' to 3' exonuclease, C-terminal subdomain"/>
    <property type="match status" value="1"/>
</dbReference>
<dbReference type="SUPFAM" id="SSF88723">
    <property type="entry name" value="PIN domain-like"/>
    <property type="match status" value="1"/>
</dbReference>
<dbReference type="PROSITE" id="PS00841">
    <property type="entry name" value="XPG_1"/>
    <property type="match status" value="1"/>
</dbReference>
<dbReference type="PROSITE" id="PS00842">
    <property type="entry name" value="XPG_2"/>
    <property type="match status" value="1"/>
</dbReference>
<organism>
    <name type="scientific">Drosophila melanogaster</name>
    <name type="common">Fruit fly</name>
    <dbReference type="NCBI Taxonomy" id="7227"/>
    <lineage>
        <taxon>Eukaryota</taxon>
        <taxon>Metazoa</taxon>
        <taxon>Ecdysozoa</taxon>
        <taxon>Arthropoda</taxon>
        <taxon>Hexapoda</taxon>
        <taxon>Insecta</taxon>
        <taxon>Pterygota</taxon>
        <taxon>Neoptera</taxon>
        <taxon>Endopterygota</taxon>
        <taxon>Diptera</taxon>
        <taxon>Brachycera</taxon>
        <taxon>Muscomorpha</taxon>
        <taxon>Ephydroidea</taxon>
        <taxon>Drosophilidae</taxon>
        <taxon>Drosophila</taxon>
        <taxon>Sophophora</taxon>
    </lineage>
</organism>
<comment type="function">
    <text evidence="1">5'-&gt;3' double-stranded DNA exonuclease which may also contain a cryptic 3'-&gt;5' double-stranded DNA exonuclease activity. Also exhibits endonuclease activity against 5'-overhanging flap structures similar to those generated by displacement synthesis when DNA polymerase encounters the 5'-end of a downstream Okazaki fragment. Required for DNA mismatch repair (MMR) (By similarity).</text>
</comment>
<comment type="cofactor">
    <cofactor evidence="1">
        <name>Mg(2+)</name>
        <dbReference type="ChEBI" id="CHEBI:18420"/>
    </cofactor>
    <text evidence="1">Binds 2 magnesium ions per subunit. They probably participate in the reaction catalyzed by the enzyme. May bind an additional third magnesium ion after substrate binding.</text>
</comment>
<comment type="subcellular location">
    <subcellularLocation>
        <location evidence="1">Nucleus</location>
    </subcellularLocation>
</comment>
<comment type="tissue specificity">
    <text evidence="4">Specifically expressed in the female germline.</text>
</comment>
<comment type="developmental stage">
    <text evidence="4">Maternally expressed. Accumulates in the developing oocyte.</text>
</comment>
<comment type="similarity">
    <text evidence="5">Belongs to the XPG/RAD2 endonuclease family. EXO1 subfamily.</text>
</comment>
<name>EXO1_DROME</name>
<proteinExistence type="evidence at protein level"/>
<gene>
    <name type="primary">tos</name>
    <name type="synonym">exo1</name>
    <name type="ORF">CG10387</name>
</gene>
<sequence length="732" mass="83181">MGITGLIPFVGKASSQLHLKDIRGSTVAVDTYCWLHKGVFGCAEKLARGEDTDVYIQYCLKYVNMLLSYDIKPILVFDGQHLPAKALTEKRRRDSRKQSKERAAELLRLGRIEEARSHMRRCVDVTHDMALRLIRECRSRNVDCIVAPYEADAQMAWLNRADVAQYIITEDSDLTLFGAKNIIFKLDLNGSGLLVEAEKLHLAMGCTEEKYHFDKFRRMCILSGCDYLDSLPGIGLAKACKFILKTEQEDMRIALKKIPSYLNMRNLEVDDDYIENFMKAEATFRHMFIYNPLERRMQRLCALEDYETDERYCSNAGTLLEDSEQALHLALGNLNPFSMKRLDSWTPEKAWPTPKNVKRSKHKSIWQTNFQSENTHTPKKENPCALFFKKVDFVGKTLNEEIEANQRLEQAKQTEAELFNMYSFKAKRRRSPSREDSVDQERTPPPSPVHKSRHNPFAKERTGEEANQRSPVVCENASLLRLLSPKKASPLDGEAGVKKVDSLKRSIFAKEQVQIRSRFFATQDEQTRLQREHLRDTENDDMDEQKLSSHSGHKKLRLVCKDIPGKNPIRQRCSSQISDGETDTDTTASSLLESQDKGVPSPLESQEDLNNSQPQIPTEGNTNSTTIRIKSLDLLLENSPEPTQESDRNNNDAIILLSDDSCSSDQRASSTSSSSQQRQNFLPTSKRRVGLSKPSTAKKGTPKSRTNGKLGAVSQNQTKLSMFGFQTKPVLK</sequence>
<reference key="1">
    <citation type="journal article" date="1996" name="Dev. Biol.">
        <title>A Drosophila gene encoding a nuclease specifically expressed in the female germline.</title>
        <authorList>
            <person name="Digilio F.A."/>
            <person name="Pannuti A."/>
            <person name="Lucchesi J."/>
            <person name="Furia M."/>
            <person name="Polito L."/>
        </authorList>
    </citation>
    <scope>NUCLEOTIDE SEQUENCE [GENOMIC DNA / MRNA]</scope>
    <scope>TISSUE SPECIFICITY</scope>
    <scope>DEVELOPMENTAL STAGE</scope>
    <source>
        <strain>Canton-S</strain>
    </source>
</reference>
<reference key="2">
    <citation type="journal article" date="2000" name="Science">
        <title>The genome sequence of Drosophila melanogaster.</title>
        <authorList>
            <person name="Adams M.D."/>
            <person name="Celniker S.E."/>
            <person name="Holt R.A."/>
            <person name="Evans C.A."/>
            <person name="Gocayne J.D."/>
            <person name="Amanatides P.G."/>
            <person name="Scherer S.E."/>
            <person name="Li P.W."/>
            <person name="Hoskins R.A."/>
            <person name="Galle R.F."/>
            <person name="George R.A."/>
            <person name="Lewis S.E."/>
            <person name="Richards S."/>
            <person name="Ashburner M."/>
            <person name="Henderson S.N."/>
            <person name="Sutton G.G."/>
            <person name="Wortman J.R."/>
            <person name="Yandell M.D."/>
            <person name="Zhang Q."/>
            <person name="Chen L.X."/>
            <person name="Brandon R.C."/>
            <person name="Rogers Y.-H.C."/>
            <person name="Blazej R.G."/>
            <person name="Champe M."/>
            <person name="Pfeiffer B.D."/>
            <person name="Wan K.H."/>
            <person name="Doyle C."/>
            <person name="Baxter E.G."/>
            <person name="Helt G."/>
            <person name="Nelson C.R."/>
            <person name="Miklos G.L.G."/>
            <person name="Abril J.F."/>
            <person name="Agbayani A."/>
            <person name="An H.-J."/>
            <person name="Andrews-Pfannkoch C."/>
            <person name="Baldwin D."/>
            <person name="Ballew R.M."/>
            <person name="Basu A."/>
            <person name="Baxendale J."/>
            <person name="Bayraktaroglu L."/>
            <person name="Beasley E.M."/>
            <person name="Beeson K.Y."/>
            <person name="Benos P.V."/>
            <person name="Berman B.P."/>
            <person name="Bhandari D."/>
            <person name="Bolshakov S."/>
            <person name="Borkova D."/>
            <person name="Botchan M.R."/>
            <person name="Bouck J."/>
            <person name="Brokstein P."/>
            <person name="Brottier P."/>
            <person name="Burtis K.C."/>
            <person name="Busam D.A."/>
            <person name="Butler H."/>
            <person name="Cadieu E."/>
            <person name="Center A."/>
            <person name="Chandra I."/>
            <person name="Cherry J.M."/>
            <person name="Cawley S."/>
            <person name="Dahlke C."/>
            <person name="Davenport L.B."/>
            <person name="Davies P."/>
            <person name="de Pablos B."/>
            <person name="Delcher A."/>
            <person name="Deng Z."/>
            <person name="Mays A.D."/>
            <person name="Dew I."/>
            <person name="Dietz S.M."/>
            <person name="Dodson K."/>
            <person name="Doup L.E."/>
            <person name="Downes M."/>
            <person name="Dugan-Rocha S."/>
            <person name="Dunkov B.C."/>
            <person name="Dunn P."/>
            <person name="Durbin K.J."/>
            <person name="Evangelista C.C."/>
            <person name="Ferraz C."/>
            <person name="Ferriera S."/>
            <person name="Fleischmann W."/>
            <person name="Fosler C."/>
            <person name="Gabrielian A.E."/>
            <person name="Garg N.S."/>
            <person name="Gelbart W.M."/>
            <person name="Glasser K."/>
            <person name="Glodek A."/>
            <person name="Gong F."/>
            <person name="Gorrell J.H."/>
            <person name="Gu Z."/>
            <person name="Guan P."/>
            <person name="Harris M."/>
            <person name="Harris N.L."/>
            <person name="Harvey D.A."/>
            <person name="Heiman T.J."/>
            <person name="Hernandez J.R."/>
            <person name="Houck J."/>
            <person name="Hostin D."/>
            <person name="Houston K.A."/>
            <person name="Howland T.J."/>
            <person name="Wei M.-H."/>
            <person name="Ibegwam C."/>
            <person name="Jalali M."/>
            <person name="Kalush F."/>
            <person name="Karpen G.H."/>
            <person name="Ke Z."/>
            <person name="Kennison J.A."/>
            <person name="Ketchum K.A."/>
            <person name="Kimmel B.E."/>
            <person name="Kodira C.D."/>
            <person name="Kraft C.L."/>
            <person name="Kravitz S."/>
            <person name="Kulp D."/>
            <person name="Lai Z."/>
            <person name="Lasko P."/>
            <person name="Lei Y."/>
            <person name="Levitsky A.A."/>
            <person name="Li J.H."/>
            <person name="Li Z."/>
            <person name="Liang Y."/>
            <person name="Lin X."/>
            <person name="Liu X."/>
            <person name="Mattei B."/>
            <person name="McIntosh T.C."/>
            <person name="McLeod M.P."/>
            <person name="McPherson D."/>
            <person name="Merkulov G."/>
            <person name="Milshina N.V."/>
            <person name="Mobarry C."/>
            <person name="Morris J."/>
            <person name="Moshrefi A."/>
            <person name="Mount S.M."/>
            <person name="Moy M."/>
            <person name="Murphy B."/>
            <person name="Murphy L."/>
            <person name="Muzny D.M."/>
            <person name="Nelson D.L."/>
            <person name="Nelson D.R."/>
            <person name="Nelson K.A."/>
            <person name="Nixon K."/>
            <person name="Nusskern D.R."/>
            <person name="Pacleb J.M."/>
            <person name="Palazzolo M."/>
            <person name="Pittman G.S."/>
            <person name="Pan S."/>
            <person name="Pollard J."/>
            <person name="Puri V."/>
            <person name="Reese M.G."/>
            <person name="Reinert K."/>
            <person name="Remington K."/>
            <person name="Saunders R.D.C."/>
            <person name="Scheeler F."/>
            <person name="Shen H."/>
            <person name="Shue B.C."/>
            <person name="Siden-Kiamos I."/>
            <person name="Simpson M."/>
            <person name="Skupski M.P."/>
            <person name="Smith T.J."/>
            <person name="Spier E."/>
            <person name="Spradling A.C."/>
            <person name="Stapleton M."/>
            <person name="Strong R."/>
            <person name="Sun E."/>
            <person name="Svirskas R."/>
            <person name="Tector C."/>
            <person name="Turner R."/>
            <person name="Venter E."/>
            <person name="Wang A.H."/>
            <person name="Wang X."/>
            <person name="Wang Z.-Y."/>
            <person name="Wassarman D.A."/>
            <person name="Weinstock G.M."/>
            <person name="Weissenbach J."/>
            <person name="Williams S.M."/>
            <person name="Woodage T."/>
            <person name="Worley K.C."/>
            <person name="Wu D."/>
            <person name="Yang S."/>
            <person name="Yao Q.A."/>
            <person name="Ye J."/>
            <person name="Yeh R.-F."/>
            <person name="Zaveri J.S."/>
            <person name="Zhan M."/>
            <person name="Zhang G."/>
            <person name="Zhao Q."/>
            <person name="Zheng L."/>
            <person name="Zheng X.H."/>
            <person name="Zhong F.N."/>
            <person name="Zhong W."/>
            <person name="Zhou X."/>
            <person name="Zhu S.C."/>
            <person name="Zhu X."/>
            <person name="Smith H.O."/>
            <person name="Gibbs R.A."/>
            <person name="Myers E.W."/>
            <person name="Rubin G.M."/>
            <person name="Venter J.C."/>
        </authorList>
    </citation>
    <scope>NUCLEOTIDE SEQUENCE [LARGE SCALE GENOMIC DNA]</scope>
    <source>
        <strain>Berkeley</strain>
    </source>
</reference>
<reference key="3">
    <citation type="journal article" date="2002" name="Genome Biol.">
        <title>Annotation of the Drosophila melanogaster euchromatic genome: a systematic review.</title>
        <authorList>
            <person name="Misra S."/>
            <person name="Crosby M.A."/>
            <person name="Mungall C.J."/>
            <person name="Matthews B.B."/>
            <person name="Campbell K.S."/>
            <person name="Hradecky P."/>
            <person name="Huang Y."/>
            <person name="Kaminker J.S."/>
            <person name="Millburn G.H."/>
            <person name="Prochnik S.E."/>
            <person name="Smith C.D."/>
            <person name="Tupy J.L."/>
            <person name="Whitfield E.J."/>
            <person name="Bayraktaroglu L."/>
            <person name="Berman B.P."/>
            <person name="Bettencourt B.R."/>
            <person name="Celniker S.E."/>
            <person name="de Grey A.D.N.J."/>
            <person name="Drysdale R.A."/>
            <person name="Harris N.L."/>
            <person name="Richter J."/>
            <person name="Russo S."/>
            <person name="Schroeder A.J."/>
            <person name="Shu S.Q."/>
            <person name="Stapleton M."/>
            <person name="Yamada C."/>
            <person name="Ashburner M."/>
            <person name="Gelbart W.M."/>
            <person name="Rubin G.M."/>
            <person name="Lewis S.E."/>
        </authorList>
    </citation>
    <scope>GENOME REANNOTATION</scope>
    <source>
        <strain>Berkeley</strain>
    </source>
</reference>
<reference key="4">
    <citation type="journal article" date="2002" name="Genome Biol.">
        <title>A Drosophila full-length cDNA resource.</title>
        <authorList>
            <person name="Stapleton M."/>
            <person name="Carlson J.W."/>
            <person name="Brokstein P."/>
            <person name="Yu C."/>
            <person name="Champe M."/>
            <person name="George R.A."/>
            <person name="Guarin H."/>
            <person name="Kronmiller B."/>
            <person name="Pacleb J.M."/>
            <person name="Park S."/>
            <person name="Wan K.H."/>
            <person name="Rubin G.M."/>
            <person name="Celniker S.E."/>
        </authorList>
    </citation>
    <scope>NUCLEOTIDE SEQUENCE [LARGE SCALE MRNA]</scope>
    <source>
        <strain>Berkeley</strain>
        <tissue>Embryo</tissue>
    </source>
</reference>
<reference key="5">
    <citation type="submission" date="2009-02" db="EMBL/GenBank/DDBJ databases">
        <authorList>
            <person name="Carlson J.W."/>
            <person name="Booth B."/>
            <person name="Frise E."/>
            <person name="Park S."/>
            <person name="Wan K.H."/>
            <person name="Yu C."/>
            <person name="Celniker S.E."/>
        </authorList>
    </citation>
    <scope>NUCLEOTIDE SEQUENCE [LARGE SCALE MRNA]</scope>
    <source>
        <strain>Berkeley</strain>
    </source>
</reference>
<reference key="6">
    <citation type="journal article" date="2008" name="J. Proteome Res.">
        <title>Phosphoproteome analysis of Drosophila melanogaster embryos.</title>
        <authorList>
            <person name="Zhai B."/>
            <person name="Villen J."/>
            <person name="Beausoleil S.A."/>
            <person name="Mintseris J."/>
            <person name="Gygi S.P."/>
        </authorList>
    </citation>
    <scope>PHOSPHORYLATION [LARGE SCALE ANALYSIS] AT SER-431; SER-433; THR-443 AND SER-447</scope>
    <scope>IDENTIFICATION BY MASS SPECTROMETRY</scope>
    <source>
        <tissue>Embryo</tissue>
    </source>
</reference>
<feature type="chain" id="PRO_0000154043" description="Exonuclease 1">
    <location>
        <begin position="1"/>
        <end position="732"/>
    </location>
</feature>
<feature type="region of interest" description="N-domain">
    <location>
        <begin position="1"/>
        <end position="99"/>
    </location>
</feature>
<feature type="region of interest" description="I-domain">
    <location>
        <begin position="138"/>
        <end position="230"/>
    </location>
</feature>
<feature type="region of interest" description="Disordered" evidence="2">
    <location>
        <begin position="422"/>
        <end position="471"/>
    </location>
</feature>
<feature type="region of interest" description="Disordered" evidence="2">
    <location>
        <begin position="524"/>
        <end position="625"/>
    </location>
</feature>
<feature type="region of interest" description="Disordered" evidence="2">
    <location>
        <begin position="661"/>
        <end position="716"/>
    </location>
</feature>
<feature type="compositionally biased region" description="Basic and acidic residues" evidence="2">
    <location>
        <begin position="432"/>
        <end position="442"/>
    </location>
</feature>
<feature type="compositionally biased region" description="Basic and acidic residues" evidence="2">
    <location>
        <begin position="457"/>
        <end position="467"/>
    </location>
</feature>
<feature type="compositionally biased region" description="Basic and acidic residues" evidence="2">
    <location>
        <begin position="525"/>
        <end position="537"/>
    </location>
</feature>
<feature type="compositionally biased region" description="Polar residues" evidence="2">
    <location>
        <begin position="572"/>
        <end position="593"/>
    </location>
</feature>
<feature type="compositionally biased region" description="Polar residues" evidence="2">
    <location>
        <begin position="608"/>
        <end position="625"/>
    </location>
</feature>
<feature type="compositionally biased region" description="Low complexity" evidence="2">
    <location>
        <begin position="661"/>
        <end position="677"/>
    </location>
</feature>
<feature type="compositionally biased region" description="Polar residues" evidence="2">
    <location>
        <begin position="703"/>
        <end position="716"/>
    </location>
</feature>
<feature type="binding site" evidence="1">
    <location>
        <position position="30"/>
    </location>
    <ligand>
        <name>Mg(2+)</name>
        <dbReference type="ChEBI" id="CHEBI:18420"/>
        <label>1</label>
    </ligand>
</feature>
<feature type="binding site" evidence="1">
    <location>
        <position position="78"/>
    </location>
    <ligand>
        <name>Mg(2+)</name>
        <dbReference type="ChEBI" id="CHEBI:18420"/>
        <label>1</label>
    </ligand>
</feature>
<feature type="binding site" evidence="1">
    <location>
        <position position="150"/>
    </location>
    <ligand>
        <name>Mg(2+)</name>
        <dbReference type="ChEBI" id="CHEBI:18420"/>
        <label>1</label>
    </ligand>
</feature>
<feature type="binding site" evidence="1">
    <location>
        <position position="152"/>
    </location>
    <ligand>
        <name>Mg(2+)</name>
        <dbReference type="ChEBI" id="CHEBI:18420"/>
        <label>1</label>
    </ligand>
</feature>
<feature type="binding site" evidence="1">
    <location>
        <position position="171"/>
    </location>
    <ligand>
        <name>Mg(2+)</name>
        <dbReference type="ChEBI" id="CHEBI:18420"/>
        <label>2</label>
    </ligand>
</feature>
<feature type="binding site" evidence="1">
    <location>
        <position position="173"/>
    </location>
    <ligand>
        <name>Mg(2+)</name>
        <dbReference type="ChEBI" id="CHEBI:18420"/>
        <label>2</label>
    </ligand>
</feature>
<feature type="binding site" evidence="1">
    <location>
        <position position="226"/>
    </location>
    <ligand>
        <name>Mg(2+)</name>
        <dbReference type="ChEBI" id="CHEBI:18420"/>
        <label>2</label>
    </ligand>
</feature>
<feature type="modified residue" description="Phosphoserine" evidence="3">
    <location>
        <position position="431"/>
    </location>
</feature>
<feature type="modified residue" description="Phosphoserine" evidence="3">
    <location>
        <position position="433"/>
    </location>
</feature>
<feature type="modified residue" description="Phosphothreonine" evidence="3">
    <location>
        <position position="443"/>
    </location>
</feature>
<feature type="modified residue" description="Phosphoserine" evidence="3">
    <location>
        <position position="447"/>
    </location>
</feature>
<feature type="sequence conflict" description="In Ref. 1; CAA61430." evidence="5" ref="1">
    <original>A</original>
    <variation>T</variation>
    <location>
        <position position="130"/>
    </location>
</feature>
<feature type="sequence conflict" description="In Ref. 4; AAK93218." evidence="5" ref="4">
    <original>T</original>
    <variation>I</variation>
    <location>
        <position position="701"/>
    </location>
</feature>
<protein>
    <recommendedName>
        <fullName>Exonuclease 1</fullName>
        <ecNumber>3.1.-.-</ecNumber>
    </recommendedName>
    <alternativeName>
        <fullName>Exonuclease I</fullName>
    </alternativeName>
    <alternativeName>
        <fullName>Protein tosca</fullName>
    </alternativeName>
</protein>
<keyword id="KW-0227">DNA damage</keyword>
<keyword id="KW-0228">DNA excision</keyword>
<keyword id="KW-0234">DNA repair</keyword>
<keyword id="KW-0238">DNA-binding</keyword>
<keyword id="KW-0255">Endonuclease</keyword>
<keyword id="KW-0267">Excision nuclease</keyword>
<keyword id="KW-0269">Exonuclease</keyword>
<keyword id="KW-0378">Hydrolase</keyword>
<keyword id="KW-0460">Magnesium</keyword>
<keyword id="KW-0479">Metal-binding</keyword>
<keyword id="KW-0540">Nuclease</keyword>
<keyword id="KW-0539">Nucleus</keyword>
<keyword id="KW-0597">Phosphoprotein</keyword>
<keyword id="KW-1185">Reference proteome</keyword>
<evidence type="ECO:0000250" key="1"/>
<evidence type="ECO:0000256" key="2">
    <source>
        <dbReference type="SAM" id="MobiDB-lite"/>
    </source>
</evidence>
<evidence type="ECO:0000269" key="3">
    <source>
    </source>
</evidence>
<evidence type="ECO:0000269" key="4">
    <source>
    </source>
</evidence>
<evidence type="ECO:0000305" key="5"/>